<evidence type="ECO:0000255" key="1">
    <source>
        <dbReference type="HAMAP-Rule" id="MF_01602"/>
    </source>
</evidence>
<evidence type="ECO:0000255" key="2">
    <source>
        <dbReference type="PROSITE-ProRule" id="PRU01067"/>
    </source>
</evidence>
<gene>
    <name evidence="1" type="primary">lplA</name>
    <name type="ordered locus">SSPA4071</name>
</gene>
<comment type="function">
    <text evidence="1">Catalyzes both the ATP-dependent activation of exogenously supplied lipoate to lipoyl-AMP and the transfer of the activated lipoyl onto the lipoyl domains of lipoate-dependent enzymes.</text>
</comment>
<comment type="catalytic activity">
    <reaction evidence="1">
        <text>L-lysyl-[lipoyl-carrier protein] + (R)-lipoate + ATP = N(6)-[(R)-lipoyl]-L-lysyl-[lipoyl-carrier protein] + AMP + diphosphate + H(+)</text>
        <dbReference type="Rhea" id="RHEA:49288"/>
        <dbReference type="Rhea" id="RHEA-COMP:10500"/>
        <dbReference type="Rhea" id="RHEA-COMP:10502"/>
        <dbReference type="ChEBI" id="CHEBI:15378"/>
        <dbReference type="ChEBI" id="CHEBI:29969"/>
        <dbReference type="ChEBI" id="CHEBI:30616"/>
        <dbReference type="ChEBI" id="CHEBI:33019"/>
        <dbReference type="ChEBI" id="CHEBI:83088"/>
        <dbReference type="ChEBI" id="CHEBI:83099"/>
        <dbReference type="ChEBI" id="CHEBI:456215"/>
        <dbReference type="EC" id="6.3.1.20"/>
    </reaction>
</comment>
<comment type="pathway">
    <text evidence="1">Protein modification; protein lipoylation via exogenous pathway; protein N(6)-(lipoyl)lysine from lipoate: step 1/2.</text>
</comment>
<comment type="pathway">
    <text evidence="1">Protein modification; protein lipoylation via exogenous pathway; protein N(6)-(lipoyl)lysine from lipoate: step 2/2.</text>
</comment>
<comment type="subunit">
    <text evidence="1">Monomer.</text>
</comment>
<comment type="subcellular location">
    <subcellularLocation>
        <location evidence="1">Cytoplasm</location>
    </subcellularLocation>
</comment>
<comment type="miscellaneous">
    <text evidence="1">In the transfer reaction, the free carboxyl group of lipoic acid is attached via an amide linkage to the epsilon-amino group of a specific lysine residue of lipoyl domains of lipoate-dependent enzymes.</text>
</comment>
<comment type="similarity">
    <text evidence="1">Belongs to the LplA family.</text>
</comment>
<dbReference type="EC" id="6.3.1.20" evidence="1"/>
<dbReference type="EMBL" id="FM200053">
    <property type="protein sequence ID" value="CAR62368.1"/>
    <property type="molecule type" value="Genomic_DNA"/>
</dbReference>
<dbReference type="RefSeq" id="WP_000209782.1">
    <property type="nucleotide sequence ID" value="NC_011147.1"/>
</dbReference>
<dbReference type="SMR" id="B5BAK2"/>
<dbReference type="KEGG" id="sek:SSPA4071"/>
<dbReference type="HOGENOM" id="CLU_022986_0_1_6"/>
<dbReference type="UniPathway" id="UPA00537">
    <property type="reaction ID" value="UER00594"/>
</dbReference>
<dbReference type="UniPathway" id="UPA00537">
    <property type="reaction ID" value="UER00595"/>
</dbReference>
<dbReference type="Proteomes" id="UP000001869">
    <property type="component" value="Chromosome"/>
</dbReference>
<dbReference type="GO" id="GO:0005829">
    <property type="term" value="C:cytosol"/>
    <property type="evidence" value="ECO:0007669"/>
    <property type="project" value="TreeGrafter"/>
</dbReference>
<dbReference type="GO" id="GO:0005524">
    <property type="term" value="F:ATP binding"/>
    <property type="evidence" value="ECO:0007669"/>
    <property type="project" value="UniProtKB-KW"/>
</dbReference>
<dbReference type="GO" id="GO:0016979">
    <property type="term" value="F:lipoate-protein ligase activity"/>
    <property type="evidence" value="ECO:0007669"/>
    <property type="project" value="UniProtKB-UniRule"/>
</dbReference>
<dbReference type="GO" id="GO:0017118">
    <property type="term" value="F:lipoyltransferase activity"/>
    <property type="evidence" value="ECO:0007669"/>
    <property type="project" value="TreeGrafter"/>
</dbReference>
<dbReference type="GO" id="GO:0036211">
    <property type="term" value="P:protein modification process"/>
    <property type="evidence" value="ECO:0007669"/>
    <property type="project" value="InterPro"/>
</dbReference>
<dbReference type="CDD" id="cd16443">
    <property type="entry name" value="LplA"/>
    <property type="match status" value="1"/>
</dbReference>
<dbReference type="FunFam" id="3.30.390.50:FF:000002">
    <property type="entry name" value="Lipoate-protein ligase A"/>
    <property type="match status" value="1"/>
</dbReference>
<dbReference type="FunFam" id="3.30.930.10:FF:000024">
    <property type="entry name" value="Lipoate-protein ligase A"/>
    <property type="match status" value="1"/>
</dbReference>
<dbReference type="Gene3D" id="3.30.930.10">
    <property type="entry name" value="Bira Bifunctional Protein, Domain 2"/>
    <property type="match status" value="1"/>
</dbReference>
<dbReference type="Gene3D" id="3.30.390.50">
    <property type="entry name" value="CO dehydrogenase flavoprotein, C-terminal domain"/>
    <property type="match status" value="1"/>
</dbReference>
<dbReference type="HAMAP" id="MF_01602">
    <property type="entry name" value="LplA"/>
    <property type="match status" value="1"/>
</dbReference>
<dbReference type="InterPro" id="IPR045864">
    <property type="entry name" value="aa-tRNA-synth_II/BPL/LPL"/>
</dbReference>
<dbReference type="InterPro" id="IPR004143">
    <property type="entry name" value="BPL_LPL_catalytic"/>
</dbReference>
<dbReference type="InterPro" id="IPR023741">
    <property type="entry name" value="Lipoate_ligase_A"/>
</dbReference>
<dbReference type="InterPro" id="IPR019491">
    <property type="entry name" value="Lipoate_protein_ligase_C"/>
</dbReference>
<dbReference type="InterPro" id="IPR004562">
    <property type="entry name" value="LipoylTrfase_LipoateP_Ligase"/>
</dbReference>
<dbReference type="NCBIfam" id="TIGR00545">
    <property type="entry name" value="lipoyltrans"/>
    <property type="match status" value="1"/>
</dbReference>
<dbReference type="PANTHER" id="PTHR12561">
    <property type="entry name" value="LIPOATE-PROTEIN LIGASE"/>
    <property type="match status" value="1"/>
</dbReference>
<dbReference type="PANTHER" id="PTHR12561:SF3">
    <property type="entry name" value="LIPOYLTRANSFERASE 1, MITOCHONDRIAL"/>
    <property type="match status" value="1"/>
</dbReference>
<dbReference type="Pfam" id="PF10437">
    <property type="entry name" value="Lip_prot_lig_C"/>
    <property type="match status" value="1"/>
</dbReference>
<dbReference type="Pfam" id="PF21948">
    <property type="entry name" value="LplA-B_cat"/>
    <property type="match status" value="1"/>
</dbReference>
<dbReference type="SUPFAM" id="SSF55681">
    <property type="entry name" value="Class II aaRS and biotin synthetases"/>
    <property type="match status" value="1"/>
</dbReference>
<dbReference type="SUPFAM" id="SSF82649">
    <property type="entry name" value="SufE/NifU"/>
    <property type="match status" value="1"/>
</dbReference>
<dbReference type="PROSITE" id="PS51733">
    <property type="entry name" value="BPL_LPL_CATALYTIC"/>
    <property type="match status" value="1"/>
</dbReference>
<sequence length="338" mass="37840">MTTLRLLISDSYDPWFNLAVEEYIFRQMPATQRVLFLWRNADTVVIGRAQNPWKECNTRRMEEDNVRLARRSSGGGAVFHDLGNTCFTFMAGKPEYDKTISTHIVLAALNSLGVMADASGRNDLVVKTPDGDRKVSGSAYRETKDRGFHHGTLLLNADLSRLANYLNPDKKKLAAKGITSVRSRVANLTELLPGITHEQVCQAVTEAFFAHYGERIDAEVISPDKTPDLPNFTETFARQSSWEWNFGQAPAFSHLLDERFTWGGVELHFDVEKGVITRAQAFTDSLNPAPLEALAGRLQGCQYRADKLQETCEALIATFPEQESELRELANWVAGAVR</sequence>
<reference key="1">
    <citation type="journal article" date="2009" name="BMC Genomics">
        <title>Pseudogene accumulation in the evolutionary histories of Salmonella enterica serovars Paratyphi A and Typhi.</title>
        <authorList>
            <person name="Holt K.E."/>
            <person name="Thomson N.R."/>
            <person name="Wain J."/>
            <person name="Langridge G.C."/>
            <person name="Hasan R."/>
            <person name="Bhutta Z.A."/>
            <person name="Quail M.A."/>
            <person name="Norbertczak H."/>
            <person name="Walker D."/>
            <person name="Simmonds M."/>
            <person name="White B."/>
            <person name="Bason N."/>
            <person name="Mungall K."/>
            <person name="Dougan G."/>
            <person name="Parkhill J."/>
        </authorList>
    </citation>
    <scope>NUCLEOTIDE SEQUENCE [LARGE SCALE GENOMIC DNA]</scope>
    <source>
        <strain>AKU_12601</strain>
    </source>
</reference>
<feature type="chain" id="PRO_1000148116" description="Lipoate-protein ligase A">
    <location>
        <begin position="1"/>
        <end position="338"/>
    </location>
</feature>
<feature type="domain" description="BPL/LPL catalytic" evidence="2">
    <location>
        <begin position="29"/>
        <end position="216"/>
    </location>
</feature>
<feature type="binding site" evidence="1">
    <location>
        <position position="71"/>
    </location>
    <ligand>
        <name>ATP</name>
        <dbReference type="ChEBI" id="CHEBI:30616"/>
    </ligand>
</feature>
<feature type="binding site" evidence="1">
    <location>
        <begin position="76"/>
        <end position="79"/>
    </location>
    <ligand>
        <name>ATP</name>
        <dbReference type="ChEBI" id="CHEBI:30616"/>
    </ligand>
</feature>
<feature type="binding site" evidence="1">
    <location>
        <position position="134"/>
    </location>
    <ligand>
        <name>(R)-lipoate</name>
        <dbReference type="ChEBI" id="CHEBI:83088"/>
    </ligand>
</feature>
<feature type="binding site" evidence="1">
    <location>
        <position position="134"/>
    </location>
    <ligand>
        <name>ATP</name>
        <dbReference type="ChEBI" id="CHEBI:30616"/>
    </ligand>
</feature>
<protein>
    <recommendedName>
        <fullName evidence="1">Lipoate-protein ligase A</fullName>
        <ecNumber evidence="1">6.3.1.20</ecNumber>
    </recommendedName>
    <alternativeName>
        <fullName evidence="1">Lipoate--protein ligase</fullName>
    </alternativeName>
</protein>
<accession>B5BAK2</accession>
<proteinExistence type="inferred from homology"/>
<name>LPLA_SALPK</name>
<keyword id="KW-0067">ATP-binding</keyword>
<keyword id="KW-0963">Cytoplasm</keyword>
<keyword id="KW-0436">Ligase</keyword>
<keyword id="KW-0547">Nucleotide-binding</keyword>
<organism>
    <name type="scientific">Salmonella paratyphi A (strain AKU_12601)</name>
    <dbReference type="NCBI Taxonomy" id="554290"/>
    <lineage>
        <taxon>Bacteria</taxon>
        <taxon>Pseudomonadati</taxon>
        <taxon>Pseudomonadota</taxon>
        <taxon>Gammaproteobacteria</taxon>
        <taxon>Enterobacterales</taxon>
        <taxon>Enterobacteriaceae</taxon>
        <taxon>Salmonella</taxon>
    </lineage>
</organism>